<gene>
    <name evidence="1" type="primary">msrB</name>
    <name type="ordered locus">Bmul_1365</name>
    <name type="ordered locus">BMULJ_01878</name>
</gene>
<sequence>MSHDADDKTYPYRKDDAELRRRLTPLQYEVTQHAATERAFTGEYTDKEDDGIYKCVVCDTPLFESGAKFHSGCGWPSYFKPLNGEVIDEKIDYSHGMVRVEVRCNHCGAHLGHVFEDGPRDKTGLRYCINSAALNFESRPEND</sequence>
<accession>A9AJS6</accession>
<proteinExistence type="inferred from homology"/>
<organism>
    <name type="scientific">Burkholderia multivorans (strain ATCC 17616 / 249)</name>
    <dbReference type="NCBI Taxonomy" id="395019"/>
    <lineage>
        <taxon>Bacteria</taxon>
        <taxon>Pseudomonadati</taxon>
        <taxon>Pseudomonadota</taxon>
        <taxon>Betaproteobacteria</taxon>
        <taxon>Burkholderiales</taxon>
        <taxon>Burkholderiaceae</taxon>
        <taxon>Burkholderia</taxon>
        <taxon>Burkholderia cepacia complex</taxon>
    </lineage>
</organism>
<keyword id="KW-0479">Metal-binding</keyword>
<keyword id="KW-0560">Oxidoreductase</keyword>
<keyword id="KW-1185">Reference proteome</keyword>
<keyword id="KW-0862">Zinc</keyword>
<protein>
    <recommendedName>
        <fullName evidence="1">Peptide methionine sulfoxide reductase MsrB</fullName>
        <ecNumber evidence="1">1.8.4.12</ecNumber>
    </recommendedName>
    <alternativeName>
        <fullName evidence="1">Peptide-methionine (R)-S-oxide reductase</fullName>
    </alternativeName>
</protein>
<name>MSRB_BURM1</name>
<evidence type="ECO:0000255" key="1">
    <source>
        <dbReference type="HAMAP-Rule" id="MF_01400"/>
    </source>
</evidence>
<evidence type="ECO:0000255" key="2">
    <source>
        <dbReference type="PROSITE-ProRule" id="PRU01126"/>
    </source>
</evidence>
<feature type="chain" id="PRO_1000145356" description="Peptide methionine sulfoxide reductase MsrB">
    <location>
        <begin position="1"/>
        <end position="143"/>
    </location>
</feature>
<feature type="domain" description="MsrB" evidence="2">
    <location>
        <begin position="16"/>
        <end position="139"/>
    </location>
</feature>
<feature type="active site" description="Nucleophile" evidence="2">
    <location>
        <position position="128"/>
    </location>
</feature>
<feature type="binding site" evidence="2">
    <location>
        <position position="55"/>
    </location>
    <ligand>
        <name>Zn(2+)</name>
        <dbReference type="ChEBI" id="CHEBI:29105"/>
    </ligand>
</feature>
<feature type="binding site" evidence="2">
    <location>
        <position position="58"/>
    </location>
    <ligand>
        <name>Zn(2+)</name>
        <dbReference type="ChEBI" id="CHEBI:29105"/>
    </ligand>
</feature>
<feature type="binding site" evidence="2">
    <location>
        <position position="104"/>
    </location>
    <ligand>
        <name>Zn(2+)</name>
        <dbReference type="ChEBI" id="CHEBI:29105"/>
    </ligand>
</feature>
<feature type="binding site" evidence="2">
    <location>
        <position position="107"/>
    </location>
    <ligand>
        <name>Zn(2+)</name>
        <dbReference type="ChEBI" id="CHEBI:29105"/>
    </ligand>
</feature>
<reference key="1">
    <citation type="submission" date="2007-10" db="EMBL/GenBank/DDBJ databases">
        <title>Complete sequence of chromosome 1 of Burkholderia multivorans ATCC 17616.</title>
        <authorList>
            <person name="Copeland A."/>
            <person name="Lucas S."/>
            <person name="Lapidus A."/>
            <person name="Barry K."/>
            <person name="Glavina del Rio T."/>
            <person name="Dalin E."/>
            <person name="Tice H."/>
            <person name="Pitluck S."/>
            <person name="Chain P."/>
            <person name="Malfatti S."/>
            <person name="Shin M."/>
            <person name="Vergez L."/>
            <person name="Schmutz J."/>
            <person name="Larimer F."/>
            <person name="Land M."/>
            <person name="Hauser L."/>
            <person name="Kyrpides N."/>
            <person name="Kim E."/>
            <person name="Tiedje J."/>
            <person name="Richardson P."/>
        </authorList>
    </citation>
    <scope>NUCLEOTIDE SEQUENCE [LARGE SCALE GENOMIC DNA]</scope>
    <source>
        <strain>ATCC 17616 / 249</strain>
    </source>
</reference>
<reference key="2">
    <citation type="submission" date="2007-04" db="EMBL/GenBank/DDBJ databases">
        <title>Complete genome sequence of Burkholderia multivorans ATCC 17616.</title>
        <authorList>
            <person name="Ohtsubo Y."/>
            <person name="Yamashita A."/>
            <person name="Kurokawa K."/>
            <person name="Takami H."/>
            <person name="Yuhara S."/>
            <person name="Nishiyama E."/>
            <person name="Endo R."/>
            <person name="Miyazaki R."/>
            <person name="Ono A."/>
            <person name="Yano K."/>
            <person name="Ito M."/>
            <person name="Sota M."/>
            <person name="Yuji N."/>
            <person name="Hattori M."/>
            <person name="Tsuda M."/>
        </authorList>
    </citation>
    <scope>NUCLEOTIDE SEQUENCE [LARGE SCALE GENOMIC DNA]</scope>
    <source>
        <strain>ATCC 17616 / 249</strain>
    </source>
</reference>
<dbReference type="EC" id="1.8.4.12" evidence="1"/>
<dbReference type="EMBL" id="CP000868">
    <property type="protein sequence ID" value="ABX15053.1"/>
    <property type="molecule type" value="Genomic_DNA"/>
</dbReference>
<dbReference type="EMBL" id="AP009385">
    <property type="protein sequence ID" value="BAG43798.1"/>
    <property type="molecule type" value="Genomic_DNA"/>
</dbReference>
<dbReference type="RefSeq" id="WP_006415093.1">
    <property type="nucleotide sequence ID" value="NC_010084.1"/>
</dbReference>
<dbReference type="SMR" id="A9AJS6"/>
<dbReference type="STRING" id="395019.BMULJ_01878"/>
<dbReference type="GeneID" id="89570358"/>
<dbReference type="KEGG" id="bmj:BMULJ_01878"/>
<dbReference type="KEGG" id="bmu:Bmul_1365"/>
<dbReference type="eggNOG" id="COG0229">
    <property type="taxonomic scope" value="Bacteria"/>
</dbReference>
<dbReference type="HOGENOM" id="CLU_031040_8_5_4"/>
<dbReference type="Proteomes" id="UP000008815">
    <property type="component" value="Chromosome 1"/>
</dbReference>
<dbReference type="GO" id="GO:0005737">
    <property type="term" value="C:cytoplasm"/>
    <property type="evidence" value="ECO:0007669"/>
    <property type="project" value="TreeGrafter"/>
</dbReference>
<dbReference type="GO" id="GO:0033743">
    <property type="term" value="F:peptide-methionine (R)-S-oxide reductase activity"/>
    <property type="evidence" value="ECO:0007669"/>
    <property type="project" value="UniProtKB-UniRule"/>
</dbReference>
<dbReference type="GO" id="GO:0008270">
    <property type="term" value="F:zinc ion binding"/>
    <property type="evidence" value="ECO:0007669"/>
    <property type="project" value="UniProtKB-UniRule"/>
</dbReference>
<dbReference type="GO" id="GO:0030091">
    <property type="term" value="P:protein repair"/>
    <property type="evidence" value="ECO:0007669"/>
    <property type="project" value="InterPro"/>
</dbReference>
<dbReference type="GO" id="GO:0006979">
    <property type="term" value="P:response to oxidative stress"/>
    <property type="evidence" value="ECO:0007669"/>
    <property type="project" value="InterPro"/>
</dbReference>
<dbReference type="FunFam" id="2.170.150.20:FF:000003">
    <property type="entry name" value="Peptide methionine sulfoxide reductase MsrB"/>
    <property type="match status" value="1"/>
</dbReference>
<dbReference type="Gene3D" id="2.170.150.20">
    <property type="entry name" value="Peptide methionine sulfoxide reductase"/>
    <property type="match status" value="1"/>
</dbReference>
<dbReference type="HAMAP" id="MF_01400">
    <property type="entry name" value="MsrB"/>
    <property type="match status" value="1"/>
</dbReference>
<dbReference type="InterPro" id="IPR028427">
    <property type="entry name" value="Met_Sox_Rdtase_MsrB"/>
</dbReference>
<dbReference type="InterPro" id="IPR002579">
    <property type="entry name" value="Met_Sox_Rdtase_MsrB_dom"/>
</dbReference>
<dbReference type="InterPro" id="IPR011057">
    <property type="entry name" value="Mss4-like_sf"/>
</dbReference>
<dbReference type="NCBIfam" id="TIGR00357">
    <property type="entry name" value="peptide-methionine (R)-S-oxide reductase MsrB"/>
    <property type="match status" value="1"/>
</dbReference>
<dbReference type="PANTHER" id="PTHR10173">
    <property type="entry name" value="METHIONINE SULFOXIDE REDUCTASE"/>
    <property type="match status" value="1"/>
</dbReference>
<dbReference type="PANTHER" id="PTHR10173:SF52">
    <property type="entry name" value="METHIONINE-R-SULFOXIDE REDUCTASE B1"/>
    <property type="match status" value="1"/>
</dbReference>
<dbReference type="Pfam" id="PF01641">
    <property type="entry name" value="SelR"/>
    <property type="match status" value="1"/>
</dbReference>
<dbReference type="SUPFAM" id="SSF51316">
    <property type="entry name" value="Mss4-like"/>
    <property type="match status" value="1"/>
</dbReference>
<dbReference type="PROSITE" id="PS51790">
    <property type="entry name" value="MSRB"/>
    <property type="match status" value="1"/>
</dbReference>
<comment type="catalytic activity">
    <reaction evidence="1">
        <text>L-methionyl-[protein] + [thioredoxin]-disulfide + H2O = L-methionyl-(R)-S-oxide-[protein] + [thioredoxin]-dithiol</text>
        <dbReference type="Rhea" id="RHEA:24164"/>
        <dbReference type="Rhea" id="RHEA-COMP:10698"/>
        <dbReference type="Rhea" id="RHEA-COMP:10700"/>
        <dbReference type="Rhea" id="RHEA-COMP:12313"/>
        <dbReference type="Rhea" id="RHEA-COMP:12314"/>
        <dbReference type="ChEBI" id="CHEBI:15377"/>
        <dbReference type="ChEBI" id="CHEBI:16044"/>
        <dbReference type="ChEBI" id="CHEBI:29950"/>
        <dbReference type="ChEBI" id="CHEBI:45764"/>
        <dbReference type="ChEBI" id="CHEBI:50058"/>
        <dbReference type="EC" id="1.8.4.12"/>
    </reaction>
</comment>
<comment type="cofactor">
    <cofactor evidence="1">
        <name>Zn(2+)</name>
        <dbReference type="ChEBI" id="CHEBI:29105"/>
    </cofactor>
    <text evidence="1">Binds 1 zinc ion per subunit. The zinc ion is important for the structural integrity of the protein.</text>
</comment>
<comment type="similarity">
    <text evidence="1">Belongs to the MsrB Met sulfoxide reductase family.</text>
</comment>